<evidence type="ECO:0000250" key="1">
    <source>
        <dbReference type="UniProtKB" id="Q6P1D7"/>
    </source>
</evidence>
<evidence type="ECO:0000255" key="2"/>
<evidence type="ECO:0000255" key="3">
    <source>
        <dbReference type="PROSITE-ProRule" id="PRU00037"/>
    </source>
</evidence>
<evidence type="ECO:0000255" key="4">
    <source>
        <dbReference type="PROSITE-ProRule" id="PRU01256"/>
    </source>
</evidence>
<evidence type="ECO:0000256" key="5">
    <source>
        <dbReference type="SAM" id="MobiDB-lite"/>
    </source>
</evidence>
<evidence type="ECO:0000269" key="6">
    <source>
    </source>
</evidence>
<evidence type="ECO:0000269" key="7">
    <source>
    </source>
</evidence>
<evidence type="ECO:0000269" key="8">
    <source>
    </source>
</evidence>
<evidence type="ECO:0000269" key="9">
    <source>
    </source>
</evidence>
<evidence type="ECO:0000269" key="10">
    <source>
    </source>
</evidence>
<evidence type="ECO:0000269" key="11">
    <source>
    </source>
</evidence>
<evidence type="ECO:0000269" key="12">
    <source>
    </source>
</evidence>
<evidence type="ECO:0000269" key="13">
    <source>
    </source>
</evidence>
<evidence type="ECO:0000269" key="14">
    <source>
    </source>
</evidence>
<evidence type="ECO:0000303" key="15">
    <source>
    </source>
</evidence>
<evidence type="ECO:0000305" key="16"/>
<evidence type="ECO:0007744" key="17">
    <source>
    </source>
</evidence>
<evidence type="ECO:0007744" key="18">
    <source>
    </source>
</evidence>
<evidence type="ECO:0007744" key="19">
    <source>
    </source>
</evidence>
<evidence type="ECO:0007744" key="20">
    <source>
    </source>
</evidence>
<evidence type="ECO:0007744" key="21">
    <source>
    </source>
</evidence>
<evidence type="ECO:0007744" key="22">
    <source>
    </source>
</evidence>
<evidence type="ECO:0007744" key="23">
    <source>
    </source>
</evidence>
<evidence type="ECO:0007744" key="24">
    <source>
    </source>
</evidence>
<evidence type="ECO:0007829" key="25">
    <source>
        <dbReference type="PDB" id="4M7C"/>
    </source>
</evidence>
<evidence type="ECO:0007829" key="26">
    <source>
        <dbReference type="PDB" id="4UYI"/>
    </source>
</evidence>
<evidence type="ECO:0007829" key="27">
    <source>
        <dbReference type="PDB" id="7BU5"/>
    </source>
</evidence>
<evidence type="ECO:0007829" key="28">
    <source>
        <dbReference type="PDB" id="7TUJ"/>
    </source>
</evidence>
<organism>
    <name type="scientific">Homo sapiens</name>
    <name type="common">Human</name>
    <dbReference type="NCBI Taxonomy" id="9606"/>
    <lineage>
        <taxon>Eukaryota</taxon>
        <taxon>Metazoa</taxon>
        <taxon>Chordata</taxon>
        <taxon>Craniata</taxon>
        <taxon>Vertebrata</taxon>
        <taxon>Euteleostomi</taxon>
        <taxon>Mammalia</taxon>
        <taxon>Eutheria</taxon>
        <taxon>Euarchontoglires</taxon>
        <taxon>Primates</taxon>
        <taxon>Haplorrhini</taxon>
        <taxon>Catarrhini</taxon>
        <taxon>Hominidae</taxon>
        <taxon>Homo</taxon>
    </lineage>
</organism>
<dbReference type="EMBL" id="AC006111">
    <property type="status" value="NOT_ANNOTATED_CDS"/>
    <property type="molecule type" value="Genomic_DNA"/>
</dbReference>
<dbReference type="EMBL" id="AB075867">
    <property type="protein sequence ID" value="BAB85573.1"/>
    <property type="molecule type" value="mRNA"/>
</dbReference>
<dbReference type="EMBL" id="AB058687">
    <property type="protein sequence ID" value="BAB47413.1"/>
    <property type="molecule type" value="mRNA"/>
</dbReference>
<dbReference type="EMBL" id="AL442083">
    <property type="protein sequence ID" value="CAH10659.1"/>
    <property type="molecule type" value="mRNA"/>
</dbReference>
<dbReference type="CCDS" id="CCDS10506.2">
    <molecule id="Q8IY92-1"/>
</dbReference>
<dbReference type="RefSeq" id="NP_115820.2">
    <molecule id="Q8IY92-1"/>
    <property type="nucleotide sequence ID" value="NM_032444.4"/>
</dbReference>
<dbReference type="RefSeq" id="XP_024306239.1">
    <molecule id="Q8IY92-1"/>
    <property type="nucleotide sequence ID" value="XM_024450471.2"/>
</dbReference>
<dbReference type="RefSeq" id="XP_054170167.1">
    <molecule id="Q8IY92-1"/>
    <property type="nucleotide sequence ID" value="XM_054314192.1"/>
</dbReference>
<dbReference type="PDB" id="4M7C">
    <property type="method" value="X-ray"/>
    <property type="resolution" value="2.05 A"/>
    <property type="chains" value="C/D=1014-1025"/>
</dbReference>
<dbReference type="PDB" id="4UYI">
    <property type="method" value="X-ray"/>
    <property type="resolution" value="1.86 A"/>
    <property type="chains" value="A=668-796"/>
</dbReference>
<dbReference type="PDB" id="4ZOU">
    <property type="method" value="X-ray"/>
    <property type="resolution" value="2.15 A"/>
    <property type="chains" value="A=669-787"/>
</dbReference>
<dbReference type="PDB" id="7BU5">
    <property type="method" value="X-ray"/>
    <property type="resolution" value="1.80 A"/>
    <property type="chains" value="B=1550-1610"/>
</dbReference>
<dbReference type="PDB" id="7TUJ">
    <property type="method" value="NMR"/>
    <property type="chains" value="A=1528-1613"/>
</dbReference>
<dbReference type="PDBsum" id="4M7C"/>
<dbReference type="PDBsum" id="4UYI"/>
<dbReference type="PDBsum" id="4ZOU"/>
<dbReference type="PDBsum" id="7BU5"/>
<dbReference type="PDBsum" id="7TUJ"/>
<dbReference type="SMR" id="Q8IY92"/>
<dbReference type="BioGRID" id="124097">
    <property type="interactions" value="577"/>
</dbReference>
<dbReference type="ComplexPortal" id="CPX-484">
    <property type="entry name" value="SLX4-TERF2 complex"/>
</dbReference>
<dbReference type="ComplexPortal" id="CPX-8175">
    <property type="entry name" value="SLX1-SLX4 structure-specific endonuclease complex"/>
</dbReference>
<dbReference type="FunCoup" id="Q8IY92">
    <property type="interactions" value="1929"/>
</dbReference>
<dbReference type="IntAct" id="Q8IY92">
    <property type="interactions" value="188"/>
</dbReference>
<dbReference type="STRING" id="9606.ENSP00000294008"/>
<dbReference type="GlyGen" id="Q8IY92">
    <property type="glycosylation" value="2 sites, 2 N-linked glycans (2 sites)"/>
</dbReference>
<dbReference type="iPTMnet" id="Q8IY92"/>
<dbReference type="PhosphoSitePlus" id="Q8IY92"/>
<dbReference type="BioMuta" id="SLX4"/>
<dbReference type="DMDM" id="205371796"/>
<dbReference type="jPOST" id="Q8IY92"/>
<dbReference type="MassIVE" id="Q8IY92"/>
<dbReference type="PaxDb" id="9606-ENSP00000294008"/>
<dbReference type="PeptideAtlas" id="Q8IY92"/>
<dbReference type="ProteomicsDB" id="71127">
    <molecule id="Q8IY92-1"/>
</dbReference>
<dbReference type="ProteomicsDB" id="71128">
    <molecule id="Q8IY92-2"/>
</dbReference>
<dbReference type="Pumba" id="Q8IY92"/>
<dbReference type="Antibodypedia" id="24180">
    <property type="antibodies" value="84 antibodies from 13 providers"/>
</dbReference>
<dbReference type="DNASU" id="84464"/>
<dbReference type="Ensembl" id="ENST00000294008.4">
    <molecule id="Q8IY92-1"/>
    <property type="protein sequence ID" value="ENSP00000294008.3"/>
    <property type="gene ID" value="ENSG00000188827.12"/>
</dbReference>
<dbReference type="GeneID" id="84464"/>
<dbReference type="KEGG" id="hsa:84464"/>
<dbReference type="MANE-Select" id="ENST00000294008.4">
    <property type="protein sequence ID" value="ENSP00000294008.3"/>
    <property type="RefSeq nucleotide sequence ID" value="NM_032444.4"/>
    <property type="RefSeq protein sequence ID" value="NP_115820.2"/>
</dbReference>
<dbReference type="UCSC" id="uc002cvp.3">
    <molecule id="Q8IY92-1"/>
    <property type="organism name" value="human"/>
</dbReference>
<dbReference type="AGR" id="HGNC:23845"/>
<dbReference type="CTD" id="84464"/>
<dbReference type="DisGeNET" id="84464"/>
<dbReference type="GeneCards" id="SLX4"/>
<dbReference type="GeneReviews" id="SLX4"/>
<dbReference type="HGNC" id="HGNC:23845">
    <property type="gene designation" value="SLX4"/>
</dbReference>
<dbReference type="HPA" id="ENSG00000188827">
    <property type="expression patterns" value="Tissue enhanced (brain, testis)"/>
</dbReference>
<dbReference type="MalaCards" id="SLX4"/>
<dbReference type="MIM" id="613278">
    <property type="type" value="gene"/>
</dbReference>
<dbReference type="MIM" id="613951">
    <property type="type" value="phenotype"/>
</dbReference>
<dbReference type="neXtProt" id="NX_Q8IY92"/>
<dbReference type="OpenTargets" id="ENSG00000188827"/>
<dbReference type="Orphanet" id="84">
    <property type="disease" value="Fanconi anemia"/>
</dbReference>
<dbReference type="PharmGKB" id="PA134983583"/>
<dbReference type="VEuPathDB" id="HostDB:ENSG00000188827"/>
<dbReference type="eggNOG" id="ENOG502R4G8">
    <property type="taxonomic scope" value="Eukaryota"/>
</dbReference>
<dbReference type="GeneTree" id="ENSGT00390000014091"/>
<dbReference type="HOGENOM" id="CLU_003520_0_0_1"/>
<dbReference type="InParanoid" id="Q8IY92"/>
<dbReference type="OMA" id="TKGPRHQ"/>
<dbReference type="OrthoDB" id="5576441at2759"/>
<dbReference type="PAN-GO" id="Q8IY92">
    <property type="GO annotations" value="5 GO annotations based on evolutionary models"/>
</dbReference>
<dbReference type="PhylomeDB" id="Q8IY92"/>
<dbReference type="TreeFam" id="TF106446"/>
<dbReference type="PathwayCommons" id="Q8IY92"/>
<dbReference type="Reactome" id="R-HSA-5693568">
    <property type="pathway name" value="Resolution of D-loop Structures through Holliday Junction Intermediates"/>
</dbReference>
<dbReference type="Reactome" id="R-HSA-6783310">
    <property type="pathway name" value="Fanconi Anemia Pathway"/>
</dbReference>
<dbReference type="SignaLink" id="Q8IY92"/>
<dbReference type="SIGNOR" id="Q8IY92"/>
<dbReference type="BioGRID-ORCS" id="84464">
    <property type="hits" value="69 hits in 1205 CRISPR screens"/>
</dbReference>
<dbReference type="ChiTaRS" id="SLX4">
    <property type="organism name" value="human"/>
</dbReference>
<dbReference type="EvolutionaryTrace" id="Q8IY92"/>
<dbReference type="GeneWiki" id="SLX4"/>
<dbReference type="GenomeRNAi" id="84464"/>
<dbReference type="Pharos" id="Q8IY92">
    <property type="development level" value="Tbio"/>
</dbReference>
<dbReference type="PRO" id="PR:Q8IY92"/>
<dbReference type="Proteomes" id="UP000005640">
    <property type="component" value="Chromosome 16"/>
</dbReference>
<dbReference type="RNAct" id="Q8IY92">
    <property type="molecule type" value="protein"/>
</dbReference>
<dbReference type="Bgee" id="ENSG00000188827">
    <property type="expression patterns" value="Expressed in right hemisphere of cerebellum and 116 other cell types or tissues"/>
</dbReference>
<dbReference type="GO" id="GO:0000785">
    <property type="term" value="C:chromatin"/>
    <property type="evidence" value="ECO:0000314"/>
    <property type="project" value="UniProtKB"/>
</dbReference>
<dbReference type="GO" id="GO:0000781">
    <property type="term" value="C:chromosome, telomeric region"/>
    <property type="evidence" value="ECO:0000314"/>
    <property type="project" value="BHF-UCL"/>
</dbReference>
<dbReference type="GO" id="GO:0005654">
    <property type="term" value="C:nucleoplasm"/>
    <property type="evidence" value="ECO:0000314"/>
    <property type="project" value="HPA"/>
</dbReference>
<dbReference type="GO" id="GO:0033557">
    <property type="term" value="C:Slx1-Slx4 complex"/>
    <property type="evidence" value="ECO:0000314"/>
    <property type="project" value="UniProtKB"/>
</dbReference>
<dbReference type="GO" id="GO:0003677">
    <property type="term" value="F:DNA binding"/>
    <property type="evidence" value="ECO:0007669"/>
    <property type="project" value="InterPro"/>
</dbReference>
<dbReference type="GO" id="GO:0008047">
    <property type="term" value="F:enzyme activator activity"/>
    <property type="evidence" value="ECO:0000314"/>
    <property type="project" value="UniProtKB"/>
</dbReference>
<dbReference type="GO" id="GO:0008270">
    <property type="term" value="F:zinc ion binding"/>
    <property type="evidence" value="ECO:0007669"/>
    <property type="project" value="UniProtKB-KW"/>
</dbReference>
<dbReference type="GO" id="GO:0010792">
    <property type="term" value="P:DNA double-strand break processing involved in repair via single-strand annealing"/>
    <property type="evidence" value="ECO:0000315"/>
    <property type="project" value="UniProtKB"/>
</dbReference>
<dbReference type="GO" id="GO:0006281">
    <property type="term" value="P:DNA repair"/>
    <property type="evidence" value="ECO:0000315"/>
    <property type="project" value="UniProtKB"/>
</dbReference>
<dbReference type="GO" id="GO:0006260">
    <property type="term" value="P:DNA replication"/>
    <property type="evidence" value="ECO:0007669"/>
    <property type="project" value="InterPro"/>
</dbReference>
<dbReference type="GO" id="GO:0000724">
    <property type="term" value="P:double-strand break repair via homologous recombination"/>
    <property type="evidence" value="ECO:0000315"/>
    <property type="project" value="UniProtKB"/>
</dbReference>
<dbReference type="GO" id="GO:1904357">
    <property type="term" value="P:negative regulation of telomere maintenance via telomere lengthening"/>
    <property type="evidence" value="ECO:0000315"/>
    <property type="project" value="BHF-UCL"/>
</dbReference>
<dbReference type="GO" id="GO:0006289">
    <property type="term" value="P:nucleotide-excision repair"/>
    <property type="evidence" value="ECO:0000315"/>
    <property type="project" value="UniProtKB"/>
</dbReference>
<dbReference type="GO" id="GO:1904431">
    <property type="term" value="P:positive regulation of t-circle formation"/>
    <property type="evidence" value="ECO:0000250"/>
    <property type="project" value="BHF-UCL"/>
</dbReference>
<dbReference type="GO" id="GO:0032206">
    <property type="term" value="P:positive regulation of telomere maintenance"/>
    <property type="evidence" value="ECO:0000314"/>
    <property type="project" value="ComplexPortal"/>
</dbReference>
<dbReference type="GO" id="GO:0000712">
    <property type="term" value="P:resolution of meiotic recombination intermediates"/>
    <property type="evidence" value="ECO:0000318"/>
    <property type="project" value="GO_Central"/>
</dbReference>
<dbReference type="GO" id="GO:0072429">
    <property type="term" value="P:response to intra-S DNA damage checkpoint signaling"/>
    <property type="evidence" value="ECO:0000315"/>
    <property type="project" value="MGI"/>
</dbReference>
<dbReference type="GO" id="GO:0090656">
    <property type="term" value="P:t-circle formation"/>
    <property type="evidence" value="ECO:0000315"/>
    <property type="project" value="BHF-UCL"/>
</dbReference>
<dbReference type="GO" id="GO:0061820">
    <property type="term" value="P:telomeric D-loop disassembly"/>
    <property type="evidence" value="ECO:0000315"/>
    <property type="project" value="BHF-UCL"/>
</dbReference>
<dbReference type="CDD" id="cd18288">
    <property type="entry name" value="BTB_POZ_BTBD12_SLX4"/>
    <property type="match status" value="1"/>
</dbReference>
<dbReference type="CDD" id="cd22999">
    <property type="entry name" value="SAP_SLX4"/>
    <property type="match status" value="1"/>
</dbReference>
<dbReference type="FunFam" id="3.30.710.10:FF:000116">
    <property type="entry name" value="SLX4 structure-specific endonuclease subunit"/>
    <property type="match status" value="1"/>
</dbReference>
<dbReference type="Gene3D" id="3.30.710.10">
    <property type="entry name" value="Potassium Channel Kv1.1, Chain A"/>
    <property type="match status" value="1"/>
</dbReference>
<dbReference type="InterPro" id="IPR000210">
    <property type="entry name" value="BTB/POZ_dom"/>
</dbReference>
<dbReference type="InterPro" id="IPR006642">
    <property type="entry name" value="Rad18_UBZ4"/>
</dbReference>
<dbReference type="InterPro" id="IPR011333">
    <property type="entry name" value="SKP1/BTB/POZ_sf"/>
</dbReference>
<dbReference type="InterPro" id="IPR018574">
    <property type="entry name" value="Structure-sp_endonuc_su_Slx4"/>
</dbReference>
<dbReference type="PANTHER" id="PTHR21541">
    <property type="entry name" value="BTB POZ DOMAIN CONTAINING 12"/>
    <property type="match status" value="1"/>
</dbReference>
<dbReference type="PANTHER" id="PTHR21541:SF3">
    <property type="entry name" value="STRUCTURE-SPECIFIC ENDONUCLEASE SUBUNIT SLX4"/>
    <property type="match status" value="1"/>
</dbReference>
<dbReference type="Pfam" id="PF00651">
    <property type="entry name" value="BTB"/>
    <property type="match status" value="1"/>
</dbReference>
<dbReference type="Pfam" id="PF09494">
    <property type="entry name" value="Slx4"/>
    <property type="match status" value="1"/>
</dbReference>
<dbReference type="SMART" id="SM00225">
    <property type="entry name" value="BTB"/>
    <property type="match status" value="1"/>
</dbReference>
<dbReference type="SUPFAM" id="SSF54695">
    <property type="entry name" value="POZ domain"/>
    <property type="match status" value="1"/>
</dbReference>
<dbReference type="PROSITE" id="PS50097">
    <property type="entry name" value="BTB"/>
    <property type="match status" value="1"/>
</dbReference>
<dbReference type="PROSITE" id="PS51908">
    <property type="entry name" value="ZF_UBZ4"/>
    <property type="match status" value="2"/>
</dbReference>
<sequence>MKLSVNEAQLGFYLGSLSHLSACPGIDPRSSEDQPESLKTGQMMDESDEDFKELCASFFQRVKKHGIKEVSGERKTQKAASNGTQIRSKLKRTKQTATKTKTLQGPAEKKPPSGSQAPRTKKQRVTKWQASEPAHSVNGEGGVLASAPDPPVLRETAQNTQTGNQQEPSPNLSREKTRENVPNSDSQPPPSCLTTAVPSPSKPRTAQLVLQRMQQFKRADPERLRHASEECSLEAAREENVPKDPQEEMMAGNVYGLGPPAPESDAAVALTLQQEFARVGASAHDDSLEEKGLFFCQICQKNLSAMNVTRREQHVNRCLDEAEKTLRPSVPQIPECPICGKPFLTLKSRTSHLKQCAVKMEVGPQLLLQAVRLQTAQPEGSSSPPMFSFSDHSRGLKRRGPTSKKEPRKRRKVDEAPSEDLLVAMALSRSEMEPGAAVPALRLESAFSERIRPEAENKSRKKKPPVSPPLLLVQDSETTGRQIEDRVALLLSEEVELSSTPPLPASRILKEGWERAGQCPPPPERKQSFLWEGSALTGAWAMEDFYTARLVPPLVPQRPAQGLMQEPVPPLVPPEHSELSERRSPALHGTPTAGCGSRGPSPSASQREHQALQDLVDLAREGLSASPWPGSGGLAGSEGTAGLDVVPGGLPLTGFVVPSQDKHPDRGGRTLLSLGLLVADFGAMVNNPHLSDVQFQTDSGEVLYAHKFVLYARCPLLIQYVNNEGFSAVEDGVLTQRVLLGDVSTEAARTFLHYLYTADTGLPPGLSSELSSLAHRFGVSELVHLCEQVPIATDSEGKPWEEKEAENCESRAENFQELLRSMWADEEEEAETLLKSKDHEEDQENVNEAEMEEIYEFAATQRKLLQEERAAGAGEDADWLEGGSPVSGQLLAGVQVQKQWDKVEEMEPLEPGRDEAATTWEKMGQCALPPPQGQHSGARGAEAPEQEAPEEALGHSSCSSPSRDCQAERKEGSLPHSDDAGDYEQLFSSTQGEISEPSQITSEPEEQSGAVRERGLEVSHRLAPWQASPPHPCRFLLGPPQGGSPRGSHHTSGSSLSTPRSRGGTSQVGSPTLLSPAVPSKQKRDRSILTLSKEPGHQKGKERRSVLECRNKGVLMFPEKSPSIDLTQSNPDHSSSRSQKSSSKLNEEDEVILLLDSDEELELEQTKMKSISSDPLEEKKALEISPRSCELFSIIDVDADQEPSQSPPRSEAVLQQEDEGALPENRGSLGRRGAPWLFCDRESSPSEASTTDTSWLVPATPLASRSRDCSSQTQISSLRSGLAVQAVTQHTPRASVGNREGNEVAQKFSVIRPQTPPPQTPSSCLTPVSPGTSDGRRQGHRSPSRPHPGGHPHSSPLAPHPISGDRAHFSRRFLKHSPPGPSFLNQTPAGEVVEVGDSDDEQEVASHQANRSPPLDSDPPIPIDDCCWHMEPLSPIPIDHWNLERTGPLSTSSPSRRMNEAADSRDCRSPGLLDTTPIRGSCTTQRKLQEKSSGAGSLGNSRPSFLNSALWDVWDGEEQRPPETPPPAQMPSAGGAQKPEGLETPKGANRKKNLPPKVPITPMPQYSIMETPVLKKELDRFGVRPLPKRQMVLKLKEIFQYTHQTLDSDSEDESQSSQPLLQAPHCQTLASQTYKPSRAGVHAQQEATTGPGAHRPKGPAKTKGPRHQRKHHESITPPSRSPTKEAPPGLNDDAQIPASQESVATSVDGSDSSLSSQSSSSCEFGAAFESAGEEEGEGEVSASQAAVQAADTDEALRCYIRSKPALYQKVLLYQPFELRELQAELRQNGLRVSSRRLLDFLDTHCITFTTAATRREKLQGRRRQPRGKKKVERN</sequence>
<accession>Q8IY92</accession>
<accession>Q69YT8</accession>
<accession>Q8TF15</accession>
<accession>Q96JP1</accession>
<protein>
    <recommendedName>
        <fullName>Structure-specific endonuclease subunit SLX4</fullName>
    </recommendedName>
    <alternativeName>
        <fullName>BTB/POZ domain-containing protein 12</fullName>
    </alternativeName>
</protein>
<gene>
    <name type="primary">SLX4</name>
    <name type="synonym">BTBD12</name>
    <name type="synonym">KIAA1784</name>
    <name type="synonym">KIAA1987</name>
</gene>
<keyword id="KW-0002">3D-structure</keyword>
<keyword id="KW-0025">Alternative splicing</keyword>
<keyword id="KW-0175">Coiled coil</keyword>
<keyword id="KW-0227">DNA damage</keyword>
<keyword id="KW-0233">DNA recombination</keyword>
<keyword id="KW-0234">DNA repair</keyword>
<keyword id="KW-0923">Fanconi anemia</keyword>
<keyword id="KW-1017">Isopeptide bond</keyword>
<keyword id="KW-0479">Metal-binding</keyword>
<keyword id="KW-0539">Nucleus</keyword>
<keyword id="KW-0597">Phosphoprotein</keyword>
<keyword id="KW-1267">Proteomics identification</keyword>
<keyword id="KW-1185">Reference proteome</keyword>
<keyword id="KW-0677">Repeat</keyword>
<keyword id="KW-0832">Ubl conjugation</keyword>
<keyword id="KW-0862">Zinc</keyword>
<keyword id="KW-0863">Zinc-finger</keyword>
<reference key="1">
    <citation type="journal article" date="2004" name="Nature">
        <title>The sequence and analysis of duplication-rich human chromosome 16.</title>
        <authorList>
            <person name="Martin J."/>
            <person name="Han C."/>
            <person name="Gordon L.A."/>
            <person name="Terry A."/>
            <person name="Prabhakar S."/>
            <person name="She X."/>
            <person name="Xie G."/>
            <person name="Hellsten U."/>
            <person name="Chan Y.M."/>
            <person name="Altherr M."/>
            <person name="Couronne O."/>
            <person name="Aerts A."/>
            <person name="Bajorek E."/>
            <person name="Black S."/>
            <person name="Blumer H."/>
            <person name="Branscomb E."/>
            <person name="Brown N.C."/>
            <person name="Bruno W.J."/>
            <person name="Buckingham J.M."/>
            <person name="Callen D.F."/>
            <person name="Campbell C.S."/>
            <person name="Campbell M.L."/>
            <person name="Campbell E.W."/>
            <person name="Caoile C."/>
            <person name="Challacombe J.F."/>
            <person name="Chasteen L.A."/>
            <person name="Chertkov O."/>
            <person name="Chi H.C."/>
            <person name="Christensen M."/>
            <person name="Clark L.M."/>
            <person name="Cohn J.D."/>
            <person name="Denys M."/>
            <person name="Detter J.C."/>
            <person name="Dickson M."/>
            <person name="Dimitrijevic-Bussod M."/>
            <person name="Escobar J."/>
            <person name="Fawcett J.J."/>
            <person name="Flowers D."/>
            <person name="Fotopulos D."/>
            <person name="Glavina T."/>
            <person name="Gomez M."/>
            <person name="Gonzales E."/>
            <person name="Goodstein D."/>
            <person name="Goodwin L.A."/>
            <person name="Grady D.L."/>
            <person name="Grigoriev I."/>
            <person name="Groza M."/>
            <person name="Hammon N."/>
            <person name="Hawkins T."/>
            <person name="Haydu L."/>
            <person name="Hildebrand C.E."/>
            <person name="Huang W."/>
            <person name="Israni S."/>
            <person name="Jett J."/>
            <person name="Jewett P.B."/>
            <person name="Kadner K."/>
            <person name="Kimball H."/>
            <person name="Kobayashi A."/>
            <person name="Krawczyk M.-C."/>
            <person name="Leyba T."/>
            <person name="Longmire J.L."/>
            <person name="Lopez F."/>
            <person name="Lou Y."/>
            <person name="Lowry S."/>
            <person name="Ludeman T."/>
            <person name="Manohar C.F."/>
            <person name="Mark G.A."/>
            <person name="McMurray K.L."/>
            <person name="Meincke L.J."/>
            <person name="Morgan J."/>
            <person name="Moyzis R.K."/>
            <person name="Mundt M.O."/>
            <person name="Munk A.C."/>
            <person name="Nandkeshwar R.D."/>
            <person name="Pitluck S."/>
            <person name="Pollard M."/>
            <person name="Predki P."/>
            <person name="Parson-Quintana B."/>
            <person name="Ramirez L."/>
            <person name="Rash S."/>
            <person name="Retterer J."/>
            <person name="Ricke D.O."/>
            <person name="Robinson D.L."/>
            <person name="Rodriguez A."/>
            <person name="Salamov A."/>
            <person name="Saunders E.H."/>
            <person name="Scott D."/>
            <person name="Shough T."/>
            <person name="Stallings R.L."/>
            <person name="Stalvey M."/>
            <person name="Sutherland R.D."/>
            <person name="Tapia R."/>
            <person name="Tesmer J.G."/>
            <person name="Thayer N."/>
            <person name="Thompson L.S."/>
            <person name="Tice H."/>
            <person name="Torney D.C."/>
            <person name="Tran-Gyamfi M."/>
            <person name="Tsai M."/>
            <person name="Ulanovsky L.E."/>
            <person name="Ustaszewska A."/>
            <person name="Vo N."/>
            <person name="White P.S."/>
            <person name="Williams A.L."/>
            <person name="Wills P.L."/>
            <person name="Wu J.-R."/>
            <person name="Wu K."/>
            <person name="Yang J."/>
            <person name="DeJong P."/>
            <person name="Bruce D."/>
            <person name="Doggett N.A."/>
            <person name="Deaven L."/>
            <person name="Schmutz J."/>
            <person name="Grimwood J."/>
            <person name="Richardson P."/>
            <person name="Rokhsar D.S."/>
            <person name="Eichler E.E."/>
            <person name="Gilna P."/>
            <person name="Lucas S.M."/>
            <person name="Myers R.M."/>
            <person name="Rubin E.M."/>
            <person name="Pennacchio L.A."/>
        </authorList>
    </citation>
    <scope>NUCLEOTIDE SEQUENCE [LARGE SCALE GENOMIC DNA]</scope>
</reference>
<reference key="2">
    <citation type="journal article" date="2001" name="DNA Res.">
        <title>Prediction of the coding sequences of unidentified human genes. XXII. The complete sequences of 50 new cDNA clones which code for large proteins.</title>
        <authorList>
            <person name="Nagase T."/>
            <person name="Kikuno R."/>
            <person name="Ohara O."/>
        </authorList>
    </citation>
    <scope>NUCLEOTIDE SEQUENCE [LARGE SCALE MRNA] OF 1-669 (ISOFORM 2)</scope>
    <source>
        <tissue>Brain</tissue>
    </source>
</reference>
<reference key="3">
    <citation type="journal article" date="2001" name="DNA Res.">
        <title>Prediction of the coding sequences of unidentified human genes. XX. The complete sequences of 100 new cDNA clones from brain which code for large proteins in vitro.</title>
        <authorList>
            <person name="Nagase T."/>
            <person name="Nakayama M."/>
            <person name="Nakajima D."/>
            <person name="Kikuno R."/>
            <person name="Ohara O."/>
        </authorList>
    </citation>
    <scope>NUCLEOTIDE SEQUENCE [LARGE SCALE MRNA] OF 668-1834 (ISOFORMS 1/2)</scope>
    <scope>VARIANTS SER-671; MET-952; LEU-1122 AND VAL-1221</scope>
    <source>
        <tissue>Brain</tissue>
    </source>
</reference>
<reference key="4">
    <citation type="journal article" date="2007" name="BMC Genomics">
        <title>The full-ORF clone resource of the German cDNA consortium.</title>
        <authorList>
            <person name="Bechtel S."/>
            <person name="Rosenfelder H."/>
            <person name="Duda A."/>
            <person name="Schmidt C.P."/>
            <person name="Ernst U."/>
            <person name="Wellenreuther R."/>
            <person name="Mehrle A."/>
            <person name="Schuster C."/>
            <person name="Bahr A."/>
            <person name="Bloecker H."/>
            <person name="Heubner D."/>
            <person name="Hoerlein A."/>
            <person name="Michel G."/>
            <person name="Wedler H."/>
            <person name="Koehrer K."/>
            <person name="Ottenwaelder B."/>
            <person name="Poustka A."/>
            <person name="Wiemann S."/>
            <person name="Schupp I."/>
        </authorList>
    </citation>
    <scope>NUCLEOTIDE SEQUENCE [LARGE SCALE MRNA] OF 1612-1834 (ISOFORMS 1/2)</scope>
    <source>
        <tissue>Brain</tissue>
    </source>
</reference>
<reference key="5">
    <citation type="journal article" date="2008" name="J. Proteome Res.">
        <title>Combining protein-based IMAC, peptide-based IMAC, and MudPIT for efficient phosphoproteomic analysis.</title>
        <authorList>
            <person name="Cantin G.T."/>
            <person name="Yi W."/>
            <person name="Lu B."/>
            <person name="Park S.K."/>
            <person name="Xu T."/>
            <person name="Lee J.-D."/>
            <person name="Yates J.R. III"/>
        </authorList>
    </citation>
    <scope>PHOSPHORYLATION [LARGE SCALE ANALYSIS] AT SER-1469</scope>
    <scope>IDENTIFICATION BY MASS SPECTROMETRY [LARGE SCALE ANALYSIS]</scope>
    <source>
        <tissue>Cervix carcinoma</tissue>
    </source>
</reference>
<reference key="6">
    <citation type="journal article" date="2008" name="Proc. Natl. Acad. Sci. U.S.A.">
        <title>A quantitative atlas of mitotic phosphorylation.</title>
        <authorList>
            <person name="Dephoure N."/>
            <person name="Zhou C."/>
            <person name="Villen J."/>
            <person name="Beausoleil S.A."/>
            <person name="Bakalarski C.E."/>
            <person name="Elledge S.J."/>
            <person name="Gygi S.P."/>
        </authorList>
    </citation>
    <scope>PHOSPHORYLATION [LARGE SCALE ANALYSIS] AT SER-287 AND SER-1469</scope>
    <scope>IDENTIFICATION BY MASS SPECTROMETRY [LARGE SCALE ANALYSIS]</scope>
    <source>
        <tissue>Cervix carcinoma</tissue>
    </source>
</reference>
<reference key="7">
    <citation type="journal article" date="2009" name="Cell">
        <title>Mammalian BTBD12/SLX4 assembles a Holliday junction resolvase and is required for DNA repair.</title>
        <authorList>
            <person name="Svendsen J.M."/>
            <person name="Smogorzewska A."/>
            <person name="Sowa M.E."/>
            <person name="O'Connell B.C."/>
            <person name="Gygi S.P."/>
            <person name="Elledge S.J."/>
            <person name="Harper J.W."/>
        </authorList>
    </citation>
    <scope>FUNCTION</scope>
    <scope>INTERACTION WITH SLX4IP; ERCC4; SLX1A; MSH2; MUS81; PLK1; TERF2 AND TERF2IP</scope>
    <scope>SUBCELLULAR LOCATION</scope>
</reference>
<reference key="8">
    <citation type="journal article" date="2009" name="Cell">
        <title>Human SLX4 is a Holliday junction resolvase subunit that binds multiple DNA repair/recombination endonucleases.</title>
        <authorList>
            <person name="Fekairi S."/>
            <person name="Scaglione S."/>
            <person name="Chahwan C."/>
            <person name="Taylor E.R."/>
            <person name="Tissier A."/>
            <person name="Coulon S."/>
            <person name="Dong M.-Q."/>
            <person name="Ruse C."/>
            <person name="Yates J.R. III"/>
            <person name="Russell P."/>
            <person name="Fuchs R.P."/>
            <person name="McGowan C.H."/>
            <person name="Gaillard P.-H.L."/>
        </authorList>
    </citation>
    <scope>FUNCTION</scope>
    <scope>INTERACTION WITH ERCC4; SLX1A AND MUS81</scope>
    <scope>SUBCELLULAR LOCATION</scope>
</reference>
<reference key="9">
    <citation type="journal article" date="2009" name="Mol. Cell">
        <title>Coordination of structure-specific nucleases by human SLX4/BTBD12 is required for DNA repair.</title>
        <authorList>
            <person name="Munoz I.M."/>
            <person name="Hain K."/>
            <person name="Declais A.-C."/>
            <person name="Gardiner M."/>
            <person name="Toh G.W."/>
            <person name="Sanchez-Pulido L."/>
            <person name="Heuckmann J.M."/>
            <person name="Toth R."/>
            <person name="Macartney T."/>
            <person name="Eppink B."/>
            <person name="Kanaar R."/>
            <person name="Ponting C.P."/>
            <person name="Lilley D.M.J."/>
            <person name="Rouse J."/>
        </authorList>
    </citation>
    <scope>FUNCTION</scope>
    <scope>INTERACTION WITH ERCC4; SLX1A AND MUS81-EME1</scope>
</reference>
<reference key="10">
    <citation type="journal article" date="2009" name="Mol. Cell">
        <title>Drosophila MUS312 and the vertebrate ortholog BTBD12 interact with DNA structure-specific endonucleases in DNA repair and recombination.</title>
        <authorList>
            <person name="Andersen S.L."/>
            <person name="Bergstralh D.T."/>
            <person name="Kohl K.P."/>
            <person name="LaRocque J.R."/>
            <person name="Moore C.B."/>
            <person name="Sekelsky J."/>
        </authorList>
    </citation>
    <scope>FUNCTION</scope>
    <scope>INTERACTION WITH ERCC4</scope>
</reference>
<reference key="11">
    <citation type="journal article" date="2009" name="Mol. Cell. Proteomics">
        <title>Large-scale proteomics analysis of the human kinome.</title>
        <authorList>
            <person name="Oppermann F.S."/>
            <person name="Gnad F."/>
            <person name="Olsen J.V."/>
            <person name="Hornberger R."/>
            <person name="Greff Z."/>
            <person name="Keri G."/>
            <person name="Mann M."/>
            <person name="Daub H."/>
        </authorList>
    </citation>
    <scope>IDENTIFICATION BY MASS SPECTROMETRY [LARGE SCALE ANALYSIS]</scope>
</reference>
<reference key="12">
    <citation type="journal article" date="2009" name="Sci. Signal.">
        <title>Quantitative phosphoproteomic analysis of T cell receptor signaling reveals system-wide modulation of protein-protein interactions.</title>
        <authorList>
            <person name="Mayya V."/>
            <person name="Lundgren D.H."/>
            <person name="Hwang S.-I."/>
            <person name="Rezaul K."/>
            <person name="Wu L."/>
            <person name="Eng J.K."/>
            <person name="Rodionov V."/>
            <person name="Han D.K."/>
        </authorList>
    </citation>
    <scope>IDENTIFICATION BY MASS SPECTROMETRY [LARGE SCALE ANALYSIS]</scope>
    <source>
        <tissue>Leukemic T-cell</tissue>
    </source>
</reference>
<reference key="13">
    <citation type="journal article" date="2010" name="Sci. Signal.">
        <title>Quantitative phosphoproteomics reveals widespread full phosphorylation site occupancy during mitosis.</title>
        <authorList>
            <person name="Olsen J.V."/>
            <person name="Vermeulen M."/>
            <person name="Santamaria A."/>
            <person name="Kumar C."/>
            <person name="Miller M.L."/>
            <person name="Jensen L.J."/>
            <person name="Gnad F."/>
            <person name="Cox J."/>
            <person name="Jensen T.S."/>
            <person name="Nigg E.A."/>
            <person name="Brunak S."/>
            <person name="Mann M."/>
        </authorList>
    </citation>
    <scope>PHOSPHORYLATION [LARGE SCALE ANALYSIS] AT SER-1044</scope>
    <scope>IDENTIFICATION BY MASS SPECTROMETRY [LARGE SCALE ANALYSIS]</scope>
    <source>
        <tissue>Cervix carcinoma</tissue>
    </source>
</reference>
<reference key="14">
    <citation type="journal article" date="2011" name="Nat. Genet.">
        <title>SLX4, a coordinator of structure-specific endonucleases, is mutated in a new Fanconi anemia subtype.</title>
        <authorList>
            <person name="Stoepker C."/>
            <person name="Hain K."/>
            <person name="Schuster B."/>
            <person name="Hilhorst-Hofstee Y."/>
            <person name="Rooimans M.A."/>
            <person name="Steltenpool J."/>
            <person name="Oostra A.B."/>
            <person name="Eirich K."/>
            <person name="Korthof E.T."/>
            <person name="Nieuwint A.W."/>
            <person name="Jaspers N.G."/>
            <person name="Bettecken T."/>
            <person name="Joenje H."/>
            <person name="Schindler D."/>
            <person name="Rouse J."/>
            <person name="de Winter J.P."/>
        </authorList>
    </citation>
    <scope>INVOLVEMENT IN FANCP</scope>
</reference>
<reference key="15">
    <citation type="journal article" date="2011" name="Nat. Genet.">
        <title>Mutations of the SLX4 gene in Fanconi anemia.</title>
        <authorList>
            <person name="Kim Y."/>
            <person name="Lach F.P."/>
            <person name="Desetty R."/>
            <person name="Hanenberg H."/>
            <person name="Auerbach A.D."/>
            <person name="Smogorzewska A."/>
        </authorList>
    </citation>
    <scope>INVOLVEMENT IN FANCP</scope>
</reference>
<reference key="16">
    <citation type="journal article" date="2013" name="J. Proteome Res.">
        <title>Toward a comprehensive characterization of a human cancer cell phosphoproteome.</title>
        <authorList>
            <person name="Zhou H."/>
            <person name="Di Palma S."/>
            <person name="Preisinger C."/>
            <person name="Peng M."/>
            <person name="Polat A.N."/>
            <person name="Heck A.J."/>
            <person name="Mohammed S."/>
        </authorList>
    </citation>
    <scope>PHOSPHORYLATION [LARGE SCALE ANALYSIS] AT SER-169; SER-1028; SER-1044; SER-1070; SER-1185 AND SER-1469</scope>
    <scope>IDENTIFICATION BY MASS SPECTROMETRY [LARGE SCALE ANALYSIS]</scope>
    <source>
        <tissue>Cervix carcinoma</tissue>
        <tissue>Erythroleukemia</tissue>
    </source>
</reference>
<reference key="17">
    <citation type="journal article" date="2014" name="J. Proteomics">
        <title>An enzyme assisted RP-RPLC approach for in-depth analysis of human liver phosphoproteome.</title>
        <authorList>
            <person name="Bian Y."/>
            <person name="Song C."/>
            <person name="Cheng K."/>
            <person name="Dong M."/>
            <person name="Wang F."/>
            <person name="Huang J."/>
            <person name="Sun D."/>
            <person name="Wang L."/>
            <person name="Ye M."/>
            <person name="Zou H."/>
        </authorList>
    </citation>
    <scope>IDENTIFICATION BY MASS SPECTROMETRY [LARGE SCALE ANALYSIS]</scope>
    <source>
        <tissue>Liver</tissue>
    </source>
</reference>
<reference key="18">
    <citation type="journal article" date="2014" name="Nat. Struct. Mol. Biol.">
        <title>Uncovering global SUMOylation signaling networks in a site-specific manner.</title>
        <authorList>
            <person name="Hendriks I.A."/>
            <person name="D'Souza R.C."/>
            <person name="Yang B."/>
            <person name="Verlaan-de Vries M."/>
            <person name="Mann M."/>
            <person name="Vertegaal A.C."/>
        </authorList>
    </citation>
    <scope>SUMOYLATION [LARGE SCALE ANALYSIS] AT LYS-1180 AND LYS-1575</scope>
    <scope>IDENTIFICATION BY MASS SPECTROMETRY [LARGE SCALE ANALYSIS]</scope>
</reference>
<reference key="19">
    <citation type="journal article" date="2015" name="Cell Rep.">
        <title>SUMO-2 orchestrates chromatin modifiers in response to DNA damage.</title>
        <authorList>
            <person name="Hendriks I.A."/>
            <person name="Treffers L.W."/>
            <person name="Verlaan-de Vries M."/>
            <person name="Olsen J.V."/>
            <person name="Vertegaal A.C."/>
        </authorList>
    </citation>
    <scope>SUMOYLATION [LARGE SCALE ANALYSIS] AT LYS-1575</scope>
    <scope>IDENTIFICATION BY MASS SPECTROMETRY [LARGE SCALE ANALYSIS]</scope>
</reference>
<reference key="20">
    <citation type="journal article" date="2015" name="EMBO J.">
        <title>USP45 deubiquitylase controls ERCC1-XPF endonuclease-mediated DNA damage responses.</title>
        <authorList>
            <person name="Perez-Oliva A.B."/>
            <person name="Lachaud C."/>
            <person name="Szyniarowski P."/>
            <person name="Munoz I."/>
            <person name="Macartney T."/>
            <person name="Hickson I."/>
            <person name="Rouse J."/>
            <person name="Alessi D.R."/>
        </authorList>
    </citation>
    <scope>INTERACTION WITH ERCC4</scope>
</reference>
<reference key="21">
    <citation type="journal article" date="2015" name="Mol. Cell. Proteomics">
        <title>System-wide analysis of SUMOylation dynamics in response to replication stress reveals novel small ubiquitin-like modified target proteins and acceptor lysines relevant for genome stability.</title>
        <authorList>
            <person name="Xiao Z."/>
            <person name="Chang J.G."/>
            <person name="Hendriks I.A."/>
            <person name="Sigurdsson J.O."/>
            <person name="Olsen J.V."/>
            <person name="Vertegaal A.C."/>
        </authorList>
    </citation>
    <scope>SUMOYLATION [LARGE SCALE ANALYSIS] AT LYS-291; LYS-1112; LYS-1179; LYS-1180 AND LYS-1575</scope>
    <scope>IDENTIFICATION BY MASS SPECTROMETRY [LARGE SCALE ANALYSIS]</scope>
</reference>
<reference key="22">
    <citation type="journal article" date="2017" name="Nat. Struct. Mol. Biol.">
        <title>Site-specific mapping of the human SUMO proteome reveals co-modification with phosphorylation.</title>
        <authorList>
            <person name="Hendriks I.A."/>
            <person name="Lyon D."/>
            <person name="Young C."/>
            <person name="Jensen L.J."/>
            <person name="Vertegaal A.C."/>
            <person name="Nielsen M.L."/>
        </authorList>
    </citation>
    <scope>SUMOYLATION [LARGE SCALE ANALYSIS] AT LYS-68; LYS-291; LYS-347; LYS-359; LYS-412; LYS-458; LYS-835; LYS-902; LYS-970; LYS-1081; LYS-1093; LYS-1112; LYS-1120; LYS-1169; LYS-1179; LYS-1180; LYS-1575; LYS-1576 AND LYS-1657</scope>
    <scope>IDENTIFICATION BY MASS SPECTROMETRY [LARGE SCALE ANALYSIS]</scope>
</reference>
<reference key="23">
    <citation type="journal article" date="2013" name="Hum. Mutat.">
        <title>Analysis of the novel Fanconi anemia gene SLX4/FANCP in familial breast cancer cases.</title>
        <authorList>
            <person name="Bakker J.L."/>
            <person name="van Mil S.E."/>
            <person name="Crossan G."/>
            <person name="Sabbaghian N."/>
            <person name="De Leeneer K."/>
            <person name="Poppe B."/>
            <person name="Adank M."/>
            <person name="Gille H."/>
            <person name="Verheul H."/>
            <person name="Meijers-Heijboer H."/>
            <person name="de Winter J.P."/>
            <person name="Claes K."/>
            <person name="Tischkowitz M."/>
            <person name="Waisfisz Q."/>
        </authorList>
    </citation>
    <scope>VARIANTS PHE-38; TRP-141; ALA-197; CYS-204; GLN-237; ARG-284; THR-378; THR-385; VAL-386; VAL-424; LYS-457; GLU-458; THR-505; ASN-506; MET-568; PRO-579; SER-671; LYS-787; VAL-870; GLY-894; LEU-929; GLN-942; MET-952; LEU-975; LYS-1007; TRP-1060; LEU-1122; TYR-1123; VAL-1221; PHE-1271; VAL-1286; GLY-1287; GLY-1342; PHE-1421; SER-1476; TRP-1550; VAL-1694; CYS-1814 AND SER-1834</scope>
    <scope>CHARACTERIZATION OF VARIANTS THR-378; LYS-787; TRP-1550 AND CYS-1814</scope>
    <scope>NO ASSOCIATION WITH BREAST CANCER</scope>
</reference>
<feature type="chain" id="PRO_0000186219" description="Structure-specific endonuclease subunit SLX4">
    <location>
        <begin position="1"/>
        <end position="1834"/>
    </location>
</feature>
<feature type="domain" description="BTB" evidence="3">
    <location>
        <begin position="691"/>
        <end position="764"/>
    </location>
</feature>
<feature type="zinc finger region" description="UBZ4-type 1" evidence="4">
    <location>
        <begin position="293"/>
        <end position="323"/>
    </location>
</feature>
<feature type="zinc finger region" description="UBZ4-type 2" evidence="4">
    <location>
        <begin position="333"/>
        <end position="361"/>
    </location>
</feature>
<feature type="region of interest" description="Interaction with SLX4IP, ERCC4/XPF and MSH2" evidence="9">
    <location>
        <begin position="1"/>
        <end position="669"/>
    </location>
</feature>
<feature type="region of interest" description="Disordered" evidence="5">
    <location>
        <begin position="24"/>
        <end position="49"/>
    </location>
</feature>
<feature type="region of interest" description="Disordered" evidence="5">
    <location>
        <begin position="69"/>
        <end position="206"/>
    </location>
</feature>
<feature type="region of interest" description="Disordered" evidence="5">
    <location>
        <begin position="376"/>
        <end position="417"/>
    </location>
</feature>
<feature type="region of interest" description="Disordered" evidence="5">
    <location>
        <begin position="452"/>
        <end position="471"/>
    </location>
</feature>
<feature type="region of interest" description="Disordered" evidence="5">
    <location>
        <begin position="561"/>
        <end position="610"/>
    </location>
</feature>
<feature type="region of interest" description="Interaction with PLK1 and TERF2-TERF2IP" evidence="9">
    <location>
        <begin position="684"/>
        <end position="1834"/>
    </location>
</feature>
<feature type="region of interest" description="Disordered" evidence="5">
    <location>
        <begin position="826"/>
        <end position="846"/>
    </location>
</feature>
<feature type="region of interest" description="Disordered" evidence="5">
    <location>
        <begin position="902"/>
        <end position="1151"/>
    </location>
</feature>
<feature type="region of interest" description="Disordered" evidence="5">
    <location>
        <begin position="1195"/>
        <end position="1504"/>
    </location>
</feature>
<feature type="region of interest" description="Interaction with MUS81">
    <location>
        <begin position="1328"/>
        <end position="1648"/>
    </location>
</feature>
<feature type="region of interest" description="Disordered" evidence="5">
    <location>
        <begin position="1516"/>
        <end position="1564"/>
    </location>
</feature>
<feature type="region of interest" description="Disordered" evidence="5">
    <location>
        <begin position="1605"/>
        <end position="1746"/>
    </location>
</feature>
<feature type="region of interest" description="Interaction with SLX1">
    <location>
        <begin position="1632"/>
        <end position="1834"/>
    </location>
</feature>
<feature type="coiled-coil region" evidence="2">
    <location>
        <begin position="801"/>
        <end position="870"/>
    </location>
</feature>
<feature type="compositionally biased region" description="Polar residues" evidence="5">
    <location>
        <begin position="78"/>
        <end position="87"/>
    </location>
</feature>
<feature type="compositionally biased region" description="Low complexity" evidence="5">
    <location>
        <begin position="95"/>
        <end position="104"/>
    </location>
</feature>
<feature type="compositionally biased region" description="Polar residues" evidence="5">
    <location>
        <begin position="156"/>
        <end position="172"/>
    </location>
</feature>
<feature type="compositionally biased region" description="Polar residues" evidence="5">
    <location>
        <begin position="180"/>
        <end position="204"/>
    </location>
</feature>
<feature type="compositionally biased region" description="Polar residues" evidence="5">
    <location>
        <begin position="376"/>
        <end position="385"/>
    </location>
</feature>
<feature type="compositionally biased region" description="Basic residues" evidence="5">
    <location>
        <begin position="395"/>
        <end position="411"/>
    </location>
</feature>
<feature type="compositionally biased region" description="Basic and acidic residues" evidence="5">
    <location>
        <begin position="575"/>
        <end position="584"/>
    </location>
</feature>
<feature type="compositionally biased region" description="Basic and acidic residues" evidence="5">
    <location>
        <begin position="902"/>
        <end position="916"/>
    </location>
</feature>
<feature type="compositionally biased region" description="Basic and acidic residues" evidence="5">
    <location>
        <begin position="965"/>
        <end position="979"/>
    </location>
</feature>
<feature type="compositionally biased region" description="Polar residues" evidence="5">
    <location>
        <begin position="986"/>
        <end position="1002"/>
    </location>
</feature>
<feature type="compositionally biased region" description="Basic and acidic residues" evidence="5">
    <location>
        <begin position="1011"/>
        <end position="1020"/>
    </location>
</feature>
<feature type="compositionally biased region" description="Polar residues" evidence="5">
    <location>
        <begin position="1059"/>
        <end position="1073"/>
    </location>
</feature>
<feature type="compositionally biased region" description="Basic and acidic residues" evidence="5">
    <location>
        <begin position="1094"/>
        <end position="1111"/>
    </location>
</feature>
<feature type="compositionally biased region" description="Polar residues" evidence="5">
    <location>
        <begin position="1124"/>
        <end position="1133"/>
    </location>
</feature>
<feature type="compositionally biased region" description="Polar residues" evidence="5">
    <location>
        <begin position="1245"/>
        <end position="1254"/>
    </location>
</feature>
<feature type="compositionally biased region" description="Polar residues" evidence="5">
    <location>
        <begin position="1269"/>
        <end position="1279"/>
    </location>
</feature>
<feature type="compositionally biased region" description="Basic residues" evidence="5">
    <location>
        <begin position="1338"/>
        <end position="1350"/>
    </location>
</feature>
<feature type="compositionally biased region" description="Low complexity" evidence="5">
    <location>
        <begin position="1351"/>
        <end position="1362"/>
    </location>
</feature>
<feature type="compositionally biased region" description="Acidic residues" evidence="5">
    <location>
        <begin position="1394"/>
        <end position="1403"/>
    </location>
</feature>
<feature type="compositionally biased region" description="Basic and acidic residues" evidence="5">
    <location>
        <begin position="1457"/>
        <end position="1468"/>
    </location>
</feature>
<feature type="compositionally biased region" description="Polar residues" evidence="5">
    <location>
        <begin position="1481"/>
        <end position="1504"/>
    </location>
</feature>
<feature type="compositionally biased region" description="Basic residues" evidence="5">
    <location>
        <begin position="1654"/>
        <end position="1672"/>
    </location>
</feature>
<feature type="compositionally biased region" description="Low complexity" evidence="5">
    <location>
        <begin position="1706"/>
        <end position="1730"/>
    </location>
</feature>
<feature type="binding site" evidence="4">
    <location>
        <position position="296"/>
    </location>
    <ligand>
        <name>Zn(2+)</name>
        <dbReference type="ChEBI" id="CHEBI:29105"/>
        <label>1</label>
    </ligand>
</feature>
<feature type="binding site" evidence="4">
    <location>
        <position position="299"/>
    </location>
    <ligand>
        <name>Zn(2+)</name>
        <dbReference type="ChEBI" id="CHEBI:29105"/>
        <label>1</label>
    </ligand>
</feature>
<feature type="binding site" evidence="4">
    <location>
        <position position="314"/>
    </location>
    <ligand>
        <name>Zn(2+)</name>
        <dbReference type="ChEBI" id="CHEBI:29105"/>
        <label>1</label>
    </ligand>
</feature>
<feature type="binding site" evidence="4">
    <location>
        <position position="318"/>
    </location>
    <ligand>
        <name>Zn(2+)</name>
        <dbReference type="ChEBI" id="CHEBI:29105"/>
        <label>1</label>
    </ligand>
</feature>
<feature type="binding site" evidence="4">
    <location>
        <position position="336"/>
    </location>
    <ligand>
        <name>Zn(2+)</name>
        <dbReference type="ChEBI" id="CHEBI:29105"/>
        <label>2</label>
    </ligand>
</feature>
<feature type="binding site" evidence="4">
    <location>
        <position position="339"/>
    </location>
    <ligand>
        <name>Zn(2+)</name>
        <dbReference type="ChEBI" id="CHEBI:29105"/>
        <label>2</label>
    </ligand>
</feature>
<feature type="binding site" evidence="4">
    <location>
        <position position="352"/>
    </location>
    <ligand>
        <name>Zn(2+)</name>
        <dbReference type="ChEBI" id="CHEBI:29105"/>
        <label>2</label>
    </ligand>
</feature>
<feature type="binding site" evidence="4">
    <location>
        <position position="356"/>
    </location>
    <ligand>
        <name>Zn(2+)</name>
        <dbReference type="ChEBI" id="CHEBI:29105"/>
        <label>2</label>
    </ligand>
</feature>
<feature type="modified residue" description="Phosphoserine" evidence="20">
    <location>
        <position position="169"/>
    </location>
</feature>
<feature type="modified residue" description="Phosphoserine" evidence="18">
    <location>
        <position position="287"/>
    </location>
</feature>
<feature type="modified residue" description="Phosphoserine" evidence="20">
    <location>
        <position position="1028"/>
    </location>
</feature>
<feature type="modified residue" description="Phosphoserine" evidence="19 20">
    <location>
        <position position="1044"/>
    </location>
</feature>
<feature type="modified residue" description="Phosphoserine" evidence="20">
    <location>
        <position position="1070"/>
    </location>
</feature>
<feature type="modified residue" description="Phosphoserine" evidence="1">
    <location>
        <position position="1121"/>
    </location>
</feature>
<feature type="modified residue" description="Phosphoserine" evidence="1">
    <location>
        <position position="1135"/>
    </location>
</feature>
<feature type="modified residue" description="Phosphoserine" evidence="20">
    <location>
        <position position="1185"/>
    </location>
</feature>
<feature type="modified residue" description="Phosphoserine" evidence="1">
    <location>
        <position position="1464"/>
    </location>
</feature>
<feature type="modified residue" description="Phosphoserine" evidence="17 18 20">
    <location>
        <position position="1469"/>
    </location>
</feature>
<feature type="modified residue" description="Phosphoserine" evidence="1">
    <location>
        <position position="1610"/>
    </location>
</feature>
<feature type="cross-link" description="Glycyl lysine isopeptide (Lys-Gly) (interchain with G-Cter in SUMO2)" evidence="24">
    <location>
        <position position="68"/>
    </location>
</feature>
<feature type="cross-link" description="Glycyl lysine isopeptide (Lys-Gly) (interchain with G-Cter in SUMO2)" evidence="22 24">
    <location>
        <position position="291"/>
    </location>
</feature>
<feature type="cross-link" description="Glycyl lysine isopeptide (Lys-Gly) (interchain with G-Cter in SUMO2)" evidence="24">
    <location>
        <position position="347"/>
    </location>
</feature>
<feature type="cross-link" description="Glycyl lysine isopeptide (Lys-Gly) (interchain with G-Cter in SUMO2)" evidence="24">
    <location>
        <position position="359"/>
    </location>
</feature>
<feature type="cross-link" description="Glycyl lysine isopeptide (Lys-Gly) (interchain with G-Cter in SUMO2)" evidence="24">
    <location>
        <position position="412"/>
    </location>
</feature>
<feature type="cross-link" description="Glycyl lysine isopeptide (Lys-Gly) (interchain with G-Cter in SUMO2)" evidence="24">
    <location>
        <position position="458"/>
    </location>
</feature>
<feature type="cross-link" description="Glycyl lysine isopeptide (Lys-Gly) (interchain with G-Cter in SUMO2)" evidence="24">
    <location>
        <position position="835"/>
    </location>
</feature>
<feature type="cross-link" description="Glycyl lysine isopeptide (Lys-Gly) (interchain with G-Cter in SUMO2)" evidence="24">
    <location>
        <position position="902"/>
    </location>
</feature>
<feature type="cross-link" description="Glycyl lysine isopeptide (Lys-Gly) (interchain with G-Cter in SUMO2)" evidence="24">
    <location>
        <position position="970"/>
    </location>
</feature>
<feature type="cross-link" description="Glycyl lysine isopeptide (Lys-Gly) (interchain with G-Cter in SUMO2)" evidence="24">
    <location>
        <position position="1081"/>
    </location>
</feature>
<feature type="cross-link" description="Glycyl lysine isopeptide (Lys-Gly) (interchain with G-Cter in SUMO2)" evidence="24">
    <location>
        <position position="1093"/>
    </location>
</feature>
<feature type="cross-link" description="Glycyl lysine isopeptide (Lys-Gly) (interchain with G-Cter in SUMO2)" evidence="22 24">
    <location>
        <position position="1112"/>
    </location>
</feature>
<feature type="cross-link" description="Glycyl lysine isopeptide (Lys-Gly) (interchain with G-Cter in SUMO2)" evidence="24">
    <location>
        <position position="1120"/>
    </location>
</feature>
<feature type="cross-link" description="Glycyl lysine isopeptide (Lys-Gly) (interchain with G-Cter in SUMO2)" evidence="24">
    <location>
        <position position="1169"/>
    </location>
</feature>
<feature type="cross-link" description="Glycyl lysine isopeptide (Lys-Gly) (interchain with G-Cter in SUMO2)" evidence="22 24">
    <location>
        <position position="1179"/>
    </location>
</feature>
<feature type="cross-link" description="Glycyl lysine isopeptide (Lys-Gly) (interchain with G-Cter in SUMO2)" evidence="21 22 24">
    <location>
        <position position="1180"/>
    </location>
</feature>
<feature type="cross-link" description="Glycyl lysine isopeptide (Lys-Gly) (interchain with G-Cter in SUMO2)" evidence="21 22 23 24">
    <location>
        <position position="1575"/>
    </location>
</feature>
<feature type="cross-link" description="Glycyl lysine isopeptide (Lys-Gly) (interchain with G-Cter in SUMO2)" evidence="24">
    <location>
        <position position="1576"/>
    </location>
</feature>
<feature type="cross-link" description="Glycyl lysine isopeptide (Lys-Gly) (interchain with G-Cter in SUMO2)" evidence="24">
    <location>
        <position position="1657"/>
    </location>
</feature>
<feature type="splice variant" id="VSP_035295" description="In isoform 2." evidence="15">
    <location>
        <begin position="1"/>
        <end position="312"/>
    </location>
</feature>
<feature type="splice variant" id="VSP_035296" description="In isoform 2." evidence="15">
    <original>QHVN</original>
    <variation>MFSF</variation>
    <location>
        <begin position="313"/>
        <end position="316"/>
    </location>
</feature>
<feature type="sequence variant" id="VAR_068982" description="In dbSNP:rs141167501." evidence="13">
    <original>L</original>
    <variation>F</variation>
    <location>
        <position position="38"/>
    </location>
</feature>
<feature type="sequence variant" id="VAR_068983" description="In dbSNP:rs137976282." evidence="13">
    <original>G</original>
    <variation>W</variation>
    <location>
        <position position="141"/>
    </location>
</feature>
<feature type="sequence variant" id="VAR_068984" description="In dbSNP:rs147826749." evidence="13">
    <original>V</original>
    <variation>A</variation>
    <location>
        <position position="197"/>
    </location>
</feature>
<feature type="sequence variant" id="VAR_068985" description="In dbSNP:rs79842542." evidence="13">
    <original>R</original>
    <variation>C</variation>
    <location>
        <position position="204"/>
    </location>
</feature>
<feature type="sequence variant" id="VAR_068986" description="In dbSNP:rs138615800." evidence="13">
    <original>R</original>
    <variation>Q</variation>
    <location>
        <position position="237"/>
    </location>
</feature>
<feature type="sequence variant" id="VAR_068987" description="In dbSNP:rs778405275." evidence="13">
    <original>H</original>
    <variation>R</variation>
    <location>
        <position position="284"/>
    </location>
</feature>
<feature type="sequence variant" id="VAR_068988" description="Found in a patient with familial breast cancer; likely benign; does not modify the functional properties of the protein; dbSNP:rs758572814." evidence="13">
    <original>P</original>
    <variation>T</variation>
    <location>
        <position position="378"/>
    </location>
</feature>
<feature type="sequence variant" id="VAR_068989" description="In dbSNP:rs115694169." evidence="13">
    <original>P</original>
    <variation>T</variation>
    <location>
        <position position="385"/>
    </location>
</feature>
<feature type="sequence variant" id="VAR_068990" description="In dbSNP:rs113490934." evidence="13">
    <original>M</original>
    <variation>V</variation>
    <location>
        <position position="386"/>
    </location>
</feature>
<feature type="sequence variant" id="VAR_068991" description="In dbSNP:rs551823420." evidence="13">
    <original>A</original>
    <variation>V</variation>
    <location>
        <position position="424"/>
    </location>
</feature>
<feature type="sequence variant" id="VAR_068992" description="In dbSNP:rs74319927." evidence="13">
    <original>N</original>
    <variation>K</variation>
    <location>
        <position position="457"/>
    </location>
</feature>
<feature type="sequence variant" id="VAR_068993" description="In dbSNP:rs149126845." evidence="13">
    <original>K</original>
    <variation>E</variation>
    <location>
        <position position="458"/>
    </location>
</feature>
<feature type="sequence variant" id="VAR_068994" description="In dbSNP:rs2040676569." evidence="13">
    <original>A</original>
    <variation>T</variation>
    <location>
        <position position="505"/>
    </location>
</feature>
<feature type="sequence variant" id="VAR_068995" description="In dbSNP:rs765859186." evidence="13">
    <original>S</original>
    <variation>N</variation>
    <location>
        <position position="506"/>
    </location>
</feature>
<feature type="sequence variant" id="VAR_068996" description="In dbSNP:rs371825444." evidence="13">
    <original>V</original>
    <variation>M</variation>
    <location>
        <position position="568"/>
    </location>
</feature>
<feature type="sequence variant" id="VAR_068997" description="In dbSNP:rs772504776." evidence="13">
    <original>L</original>
    <variation>P</variation>
    <location>
        <position position="579"/>
    </location>
</feature>
<feature type="sequence variant" id="VAR_068998" description="In dbSNP:rs77985244." evidence="6 13">
    <original>L</original>
    <variation>S</variation>
    <location>
        <position position="671"/>
    </location>
</feature>
<feature type="sequence variant" id="VAR_068999" description="Does not modify the functional properties of the protein; dbSNP:rs140600202." evidence="13">
    <original>E</original>
    <variation>K</variation>
    <location>
        <position position="787"/>
    </location>
</feature>
<feature type="sequence variant" id="VAR_069000" description="In dbSNP:rs149584080." evidence="13">
    <original>A</original>
    <variation>V</variation>
    <location>
        <position position="870"/>
    </location>
</feature>
<feature type="sequence variant" id="VAR_069001" description="In dbSNP:rs145137472." evidence="13">
    <original>V</original>
    <variation>G</variation>
    <location>
        <position position="894"/>
    </location>
</feature>
<feature type="sequence variant" id="VAR_069002" description="In dbSNP:rs117707719." evidence="13">
    <original>P</original>
    <variation>L</variation>
    <location>
        <position position="929"/>
    </location>
</feature>
<feature type="sequence variant" id="VAR_069003" description="In dbSNP:rs114014006." evidence="13">
    <original>E</original>
    <variation>Q</variation>
    <location>
        <position position="942"/>
    </location>
</feature>
<feature type="sequence variant" id="VAR_069004" description="Requires 2 nucleotide substitutions; dbSNP:rs863224277." evidence="6 13">
    <original>A</original>
    <variation>M</variation>
    <location>
        <position position="952"/>
    </location>
</feature>
<feature type="sequence variant" id="VAR_069005" description="In dbSNP:rs114472821." evidence="13">
    <original>P</original>
    <variation>L</variation>
    <location>
        <position position="975"/>
    </location>
</feature>
<feature type="sequence variant" id="VAR_069006" description="In dbSNP:rs138798067." evidence="13">
    <original>Q</original>
    <variation>K</variation>
    <location>
        <position position="1007"/>
    </location>
</feature>
<feature type="sequence variant" id="VAR_069007" description="In dbSNP:rs144273492." evidence="13">
    <original>R</original>
    <variation>W</variation>
    <location>
        <position position="1060"/>
    </location>
</feature>
<feature type="sequence variant" id="VAR_019326" description="In dbSNP:rs714181." evidence="6 13">
    <original>P</original>
    <variation>L</variation>
    <location>
        <position position="1122"/>
    </location>
</feature>
<feature type="sequence variant" id="VAR_069008" description="In dbSNP:rs144647122." evidence="13">
    <original>S</original>
    <variation>Y</variation>
    <location>
        <position position="1123"/>
    </location>
</feature>
<feature type="sequence variant" id="VAR_019729" description="In dbSNP:rs3827530." evidence="6 13">
    <original>A</original>
    <variation>V</variation>
    <location>
        <position position="1221"/>
    </location>
</feature>
<feature type="sequence variant" id="VAR_019327" description="In dbSNP:rs3810813." evidence="13">
    <original>S</original>
    <variation>F</variation>
    <location>
        <position position="1271"/>
    </location>
</feature>
<feature type="sequence variant" id="VAR_069009" description="In dbSNP:rs149011965." evidence="13">
    <original>A</original>
    <variation>V</variation>
    <location>
        <position position="1286"/>
    </location>
</feature>
<feature type="sequence variant" id="VAR_069010" description="In dbSNP:rs1596520811." evidence="13">
    <original>V</original>
    <variation>G</variation>
    <location>
        <position position="1287"/>
    </location>
</feature>
<feature type="sequence variant" id="VAR_069011" description="In dbSNP:rs140051968." evidence="13">
    <original>S</original>
    <variation>G</variation>
    <location>
        <position position="1342"/>
    </location>
</feature>
<feature type="sequence variant" id="VAR_046337" description="In dbSNP:rs17136464.">
    <original>A</original>
    <variation>T</variation>
    <location>
        <position position="1367"/>
    </location>
</feature>
<feature type="sequence variant" id="VAR_069012" description="In dbSNP:rs141567438." evidence="13">
    <original>I</original>
    <variation>F</variation>
    <location>
        <position position="1421"/>
    </location>
</feature>
<feature type="sequence variant" id="VAR_069013" description="In dbSNP:rs372321470." evidence="13">
    <original>T</original>
    <variation>S</variation>
    <location>
        <position position="1476"/>
    </location>
</feature>
<feature type="sequence variant" id="VAR_069014" description="Does not modify the functional properties of the protein; dbSNP:rs77021998." evidence="13">
    <original>R</original>
    <variation>W</variation>
    <location>
        <position position="1550"/>
    </location>
</feature>
<feature type="sequence variant" id="VAR_046338" description="In dbSNP:rs7196345.">
    <original>P</original>
    <variation>S</variation>
    <location>
        <position position="1677"/>
    </location>
</feature>
<feature type="sequence variant" id="VAR_069015" description="In dbSNP:rs761226343." evidence="13">
    <original>A</original>
    <variation>V</variation>
    <location>
        <position position="1694"/>
    </location>
</feature>
<feature type="sequence variant" id="VAR_069016" description="In dbSNP:rs767720336." evidence="13">
    <original>R</original>
    <variation>C</variation>
    <location>
        <position position="1814"/>
    </location>
</feature>
<feature type="sequence variant" id="VAR_069017" description="Does not modify the functional properties of the protein; dbSNP:rs111738042." evidence="13">
    <original>N</original>
    <variation>S</variation>
    <location>
        <position position="1834"/>
    </location>
</feature>
<feature type="helix" evidence="26">
    <location>
        <begin position="668"/>
        <end position="682"/>
    </location>
</feature>
<feature type="turn" evidence="26">
    <location>
        <begin position="683"/>
        <end position="686"/>
    </location>
</feature>
<feature type="strand" evidence="26">
    <location>
        <begin position="693"/>
        <end position="696"/>
    </location>
</feature>
<feature type="strand" evidence="26">
    <location>
        <begin position="702"/>
        <end position="705"/>
    </location>
</feature>
<feature type="helix" evidence="26">
    <location>
        <begin position="707"/>
        <end position="713"/>
    </location>
</feature>
<feature type="helix" evidence="26">
    <location>
        <begin position="715"/>
        <end position="724"/>
    </location>
</feature>
<feature type="strand" evidence="26">
    <location>
        <begin position="726"/>
        <end position="730"/>
    </location>
</feature>
<feature type="strand" evidence="26">
    <location>
        <begin position="733"/>
        <end position="739"/>
    </location>
</feature>
<feature type="helix" evidence="26">
    <location>
        <begin position="745"/>
        <end position="757"/>
    </location>
</feature>
<feature type="helix" evidence="26">
    <location>
        <begin position="764"/>
        <end position="766"/>
    </location>
</feature>
<feature type="helix" evidence="26">
    <location>
        <begin position="767"/>
        <end position="776"/>
    </location>
</feature>
<feature type="helix" evidence="26">
    <location>
        <begin position="780"/>
        <end position="787"/>
    </location>
</feature>
<feature type="helix" evidence="25">
    <location>
        <begin position="1016"/>
        <end position="1019"/>
    </location>
</feature>
<feature type="turn" evidence="28">
    <location>
        <begin position="1532"/>
        <end position="1534"/>
    </location>
</feature>
<feature type="strand" evidence="28">
    <location>
        <begin position="1548"/>
        <end position="1550"/>
    </location>
</feature>
<feature type="strand" evidence="28">
    <location>
        <begin position="1556"/>
        <end position="1558"/>
    </location>
</feature>
<feature type="strand" evidence="27">
    <location>
        <begin position="1560"/>
        <end position="1562"/>
    </location>
</feature>
<feature type="helix" evidence="27">
    <location>
        <begin position="1566"/>
        <end position="1568"/>
    </location>
</feature>
<feature type="helix" evidence="27">
    <location>
        <begin position="1571"/>
        <end position="1579"/>
    </location>
</feature>
<feature type="turn" evidence="27">
    <location>
        <begin position="1580"/>
        <end position="1582"/>
    </location>
</feature>
<feature type="helix" evidence="27">
    <location>
        <begin position="1588"/>
        <end position="1602"/>
    </location>
</feature>
<feature type="strand" evidence="27">
    <location>
        <begin position="1603"/>
        <end position="1605"/>
    </location>
</feature>
<proteinExistence type="evidence at protein level"/>
<comment type="function">
    <text evidence="7 8 9 10">Regulatory subunit that interacts with and increases the activity of different structure-specific endonucleases. Has several distinct roles in protecting genome stability by resolving diverse forms of deleterious DNA structures originating from replication and recombination intermediates and from DNA damage. Component of the SLX1-SLX4 structure-specific endonuclease that resolves DNA secondary structures generated during DNA repair and recombination. Has endonuclease activity towards branched DNA substrates, introducing single-strand cuts in duplex DNA close to junctions with ss-DNA. Has a preference for 5'-flap structures, and promotes symmetrical cleavage of static and migrating Holliday junctions (HJs). Resolves HJs by generating two pairs of ligatable, nicked duplex products. Interacts with the structure-specific ERCC4-ERCC1 endonuclease and promotes the cleavage of bubble structures. Interacts with the structure-specific MUS81-EME1 endonuclease and promotes the cleavage of 3'-flap and replication fork-like structures. SLX4 is required for recovery from alkylation-induced DNA damage and is involved in the resolution of DNA double-strand breaks.</text>
</comment>
<comment type="subunit">
    <text evidence="7 8 9 10 14">Forms a heterodimer with SLX1A/GIYD1. Interacts with ERCC4/XPF; catalytic subunit of the ERCC4-ERCC1 endonuclease. Interacts with MUS81; catalytic subunit of the MUS81-EME1 endonuclease. Interacts with MSH2; component of the MSH2-MSH3 mismatch repair complex. Interacts with TERF2-TERF2IP. Interacts with PLK1 and SLX4IP.</text>
</comment>
<comment type="interaction">
    <interactant intactId="EBI-2370740">
        <id>Q8IY92</id>
    </interactant>
    <interactant intactId="EBI-2370825">
        <id>Q96AY2</id>
        <label>EME1</label>
    </interactant>
    <organismsDiffer>false</organismsDiffer>
    <experiments>4</experiments>
</comment>
<comment type="interaction">
    <interactant intactId="EBI-2370740">
        <id>Q8IY92</id>
    </interactant>
    <interactant intactId="EBI-750962">
        <id>P07992</id>
        <label>ERCC1</label>
    </interactant>
    <organismsDiffer>false</organismsDiffer>
    <experiments>6</experiments>
</comment>
<comment type="interaction">
    <interactant intactId="EBI-2370740">
        <id>Q8IY92</id>
    </interactant>
    <interactant intactId="EBI-2370770">
        <id>Q92889</id>
        <label>ERCC4</label>
    </interactant>
    <organismsDiffer>false</organismsDiffer>
    <experiments>11</experiments>
</comment>
<comment type="interaction">
    <interactant intactId="EBI-2370740">
        <id>Q8IY92</id>
    </interactant>
    <interactant intactId="EBI-355888">
        <id>P43246</id>
        <label>MSH2</label>
    </interactant>
    <organismsDiffer>false</organismsDiffer>
    <experiments>5</experiments>
</comment>
<comment type="interaction">
    <interactant intactId="EBI-2370740">
        <id>Q8IY92</id>
    </interactant>
    <interactant intactId="EBI-2370806">
        <id>Q96NY9</id>
        <label>MUS81</label>
    </interactant>
    <organismsDiffer>false</organismsDiffer>
    <experiments>13</experiments>
</comment>
<comment type="interaction">
    <interactant intactId="EBI-2370740">
        <id>Q8IY92</id>
    </interactant>
    <interactant intactId="EBI-476768">
        <id>P53350</id>
        <label>PLK1</label>
    </interactant>
    <organismsDiffer>false</organismsDiffer>
    <experiments>8</experiments>
</comment>
<comment type="interaction">
    <interactant intactId="EBI-2370740">
        <id>Q8IY92</id>
    </interactant>
    <interactant intactId="EBI-2370858">
        <id>Q9BQ83</id>
        <label>SLX1B</label>
    </interactant>
    <organismsDiffer>false</organismsDiffer>
    <experiments>10</experiments>
</comment>
<comment type="interaction">
    <interactant intactId="EBI-2370740">
        <id>Q8IY92</id>
    </interactant>
    <interactant intactId="EBI-2370881">
        <id>Q5VYV7</id>
        <label>SLX4IP</label>
    </interactant>
    <organismsDiffer>false</organismsDiffer>
    <experiments>4</experiments>
</comment>
<comment type="interaction">
    <interactant intactId="EBI-2370740">
        <id>Q8IY92</id>
    </interactant>
    <interactant intactId="EBI-706637">
        <id>Q15554</id>
        <label>TERF2</label>
    </interactant>
    <organismsDiffer>false</organismsDiffer>
    <experiments>5</experiments>
</comment>
<comment type="interaction">
    <interactant intactId="EBI-2370740">
        <id>Q8IY92</id>
    </interactant>
    <interactant intactId="EBI-750109">
        <id>Q9NYB0</id>
        <label>TERF2IP</label>
    </interactant>
    <organismsDiffer>false</organismsDiffer>
    <experiments>4</experiments>
</comment>
<comment type="interaction">
    <interactant intactId="EBI-10175993">
        <id>Q8IY92-2</id>
    </interactant>
    <interactant intactId="EBI-10175987">
        <id>B3KX63</id>
        <label>MUS81</label>
    </interactant>
    <organismsDiffer>false</organismsDiffer>
    <experiments>3</experiments>
</comment>
<comment type="subcellular location">
    <subcellularLocation>
        <location evidence="9 10">Nucleus</location>
    </subcellularLocation>
    <text>Localizes to sites of DNA damage.</text>
</comment>
<comment type="alternative products">
    <event type="alternative splicing"/>
    <isoform>
        <id>Q8IY92-1</id>
        <name>1</name>
        <sequence type="displayed"/>
    </isoform>
    <isoform>
        <id>Q8IY92-2</id>
        <name>2</name>
        <sequence type="described" ref="VSP_035295 VSP_035296"/>
    </isoform>
</comment>
<comment type="disease" evidence="11 12">
    <disease id="DI-03118">
        <name>Fanconi anemia complementation group P</name>
        <acronym>FANCP</acronym>
        <description>A disorder affecting all bone marrow elements and resulting in anemia, leukopenia and thrombopenia. It is associated with cardiac, renal and limb malformations, dermal pigmentary changes, and a predisposition to the development of malignancies. At the cellular level it is associated with hypersensitivity to DNA-damaging agents, chromosomal instability (increased chromosome breakage) and defective DNA repair. Some individuals affected by Fanconi anemia of complementation group P have skeletal anomalies.</description>
        <dbReference type="MIM" id="613951"/>
    </disease>
    <text>The disease is caused by variants affecting the gene represented in this entry.</text>
</comment>
<comment type="similarity">
    <text evidence="16">Belongs to the SLX4 family.</text>
</comment>
<comment type="online information" name="SLX4 structure-specific endonuclease subunit homolog (S.cerevisiae) (SLX4)">
    <link uri="https://databases.lovd.nl/shared/genes/SLX4"/>
    <text>Leiden Open Variation Database (LOVD)</text>
</comment>
<name>SLX4_HUMAN</name>